<name>RBSD_VARPS</name>
<sequence length="132" mass="14081">MKRTALLHAELSQVIAALGHGDMLVIGDAGLPIPDGPRRIDLALTPGIPRVADVLKVVLSEMQVERALIAREAIGQLPVGQLPAWCEGQLAALPETVSHEELKRLSARAKAVIRTGECTPYANIVLYAGVTF</sequence>
<organism>
    <name type="scientific">Variovorax paradoxus (strain S110)</name>
    <dbReference type="NCBI Taxonomy" id="543728"/>
    <lineage>
        <taxon>Bacteria</taxon>
        <taxon>Pseudomonadati</taxon>
        <taxon>Pseudomonadota</taxon>
        <taxon>Betaproteobacteria</taxon>
        <taxon>Burkholderiales</taxon>
        <taxon>Comamonadaceae</taxon>
        <taxon>Variovorax</taxon>
    </lineage>
</organism>
<feature type="chain" id="PRO_1000215870" description="D-ribose pyranase">
    <location>
        <begin position="1"/>
        <end position="132"/>
    </location>
</feature>
<feature type="active site" description="Proton donor" evidence="1">
    <location>
        <position position="20"/>
    </location>
</feature>
<feature type="binding site" evidence="1">
    <location>
        <position position="28"/>
    </location>
    <ligand>
        <name>substrate</name>
    </ligand>
</feature>
<feature type="binding site" evidence="1">
    <location>
        <position position="99"/>
    </location>
    <ligand>
        <name>substrate</name>
    </ligand>
</feature>
<feature type="binding site" evidence="1">
    <location>
        <begin position="121"/>
        <end position="123"/>
    </location>
    <ligand>
        <name>substrate</name>
    </ligand>
</feature>
<proteinExistence type="inferred from homology"/>
<protein>
    <recommendedName>
        <fullName evidence="1">D-ribose pyranase</fullName>
        <ecNumber evidence="1">5.4.99.62</ecNumber>
    </recommendedName>
</protein>
<evidence type="ECO:0000255" key="1">
    <source>
        <dbReference type="HAMAP-Rule" id="MF_01661"/>
    </source>
</evidence>
<gene>
    <name evidence="1" type="primary">rbsD</name>
    <name type="ordered locus">Vapar_4641</name>
</gene>
<reference key="1">
    <citation type="journal article" date="2011" name="J. Bacteriol.">
        <title>Complete genome sequence of the metabolically versatile plant growth-promoting endophyte, Variovorax paradoxus S110.</title>
        <authorList>
            <person name="Han J.I."/>
            <person name="Choi H.K."/>
            <person name="Lee S.W."/>
            <person name="Orwin P.M."/>
            <person name="Kim J."/>
            <person name="Laroe S.L."/>
            <person name="Kim T.G."/>
            <person name="O'Neil J."/>
            <person name="Leadbetter J.R."/>
            <person name="Lee S.Y."/>
            <person name="Hur C.G."/>
            <person name="Spain J.C."/>
            <person name="Ovchinnikova G."/>
            <person name="Goodwin L."/>
            <person name="Han C."/>
        </authorList>
    </citation>
    <scope>NUCLEOTIDE SEQUENCE [LARGE SCALE GENOMIC DNA]</scope>
    <source>
        <strain>S110</strain>
    </source>
</reference>
<keyword id="KW-0119">Carbohydrate metabolism</keyword>
<keyword id="KW-0963">Cytoplasm</keyword>
<keyword id="KW-0413">Isomerase</keyword>
<accession>C5CL95</accession>
<comment type="function">
    <text evidence="1">Catalyzes the interconversion of beta-pyran and beta-furan forms of D-ribose.</text>
</comment>
<comment type="catalytic activity">
    <reaction evidence="1">
        <text>beta-D-ribopyranose = beta-D-ribofuranose</text>
        <dbReference type="Rhea" id="RHEA:25432"/>
        <dbReference type="ChEBI" id="CHEBI:27476"/>
        <dbReference type="ChEBI" id="CHEBI:47002"/>
        <dbReference type="EC" id="5.4.99.62"/>
    </reaction>
</comment>
<comment type="pathway">
    <text evidence="1">Carbohydrate metabolism; D-ribose degradation; D-ribose 5-phosphate from beta-D-ribopyranose: step 1/2.</text>
</comment>
<comment type="subunit">
    <text evidence="1">Homodecamer.</text>
</comment>
<comment type="subcellular location">
    <subcellularLocation>
        <location evidence="1">Cytoplasm</location>
    </subcellularLocation>
</comment>
<comment type="similarity">
    <text evidence="1">Belongs to the RbsD / FucU family. RbsD subfamily.</text>
</comment>
<dbReference type="EC" id="5.4.99.62" evidence="1"/>
<dbReference type="EMBL" id="CP001635">
    <property type="protein sequence ID" value="ACS21246.1"/>
    <property type="molecule type" value="Genomic_DNA"/>
</dbReference>
<dbReference type="SMR" id="C5CL95"/>
<dbReference type="STRING" id="543728.Vapar_4641"/>
<dbReference type="KEGG" id="vap:Vapar_4641"/>
<dbReference type="eggNOG" id="COG1869">
    <property type="taxonomic scope" value="Bacteria"/>
</dbReference>
<dbReference type="HOGENOM" id="CLU_135498_0_0_4"/>
<dbReference type="OrthoDB" id="9805009at2"/>
<dbReference type="UniPathway" id="UPA00916">
    <property type="reaction ID" value="UER00888"/>
</dbReference>
<dbReference type="GO" id="GO:0005829">
    <property type="term" value="C:cytosol"/>
    <property type="evidence" value="ECO:0007669"/>
    <property type="project" value="TreeGrafter"/>
</dbReference>
<dbReference type="GO" id="GO:0062193">
    <property type="term" value="F:D-ribose pyranase activity"/>
    <property type="evidence" value="ECO:0007669"/>
    <property type="project" value="UniProtKB-EC"/>
</dbReference>
<dbReference type="GO" id="GO:0016872">
    <property type="term" value="F:intramolecular lyase activity"/>
    <property type="evidence" value="ECO:0007669"/>
    <property type="project" value="UniProtKB-UniRule"/>
</dbReference>
<dbReference type="GO" id="GO:0048029">
    <property type="term" value="F:monosaccharide binding"/>
    <property type="evidence" value="ECO:0007669"/>
    <property type="project" value="InterPro"/>
</dbReference>
<dbReference type="GO" id="GO:0019303">
    <property type="term" value="P:D-ribose catabolic process"/>
    <property type="evidence" value="ECO:0007669"/>
    <property type="project" value="UniProtKB-UniRule"/>
</dbReference>
<dbReference type="Gene3D" id="3.40.1650.10">
    <property type="entry name" value="RbsD-like domain"/>
    <property type="match status" value="1"/>
</dbReference>
<dbReference type="HAMAP" id="MF_01661">
    <property type="entry name" value="D_rib_pyranase"/>
    <property type="match status" value="1"/>
</dbReference>
<dbReference type="InterPro" id="IPR023064">
    <property type="entry name" value="D-ribose_pyranase"/>
</dbReference>
<dbReference type="InterPro" id="IPR023750">
    <property type="entry name" value="RbsD-like_sf"/>
</dbReference>
<dbReference type="InterPro" id="IPR007721">
    <property type="entry name" value="RbsD_FucU"/>
</dbReference>
<dbReference type="NCBIfam" id="NF008761">
    <property type="entry name" value="PRK11797.1"/>
    <property type="match status" value="1"/>
</dbReference>
<dbReference type="PANTHER" id="PTHR37831">
    <property type="entry name" value="D-RIBOSE PYRANASE"/>
    <property type="match status" value="1"/>
</dbReference>
<dbReference type="PANTHER" id="PTHR37831:SF1">
    <property type="entry name" value="D-RIBOSE PYRANASE"/>
    <property type="match status" value="1"/>
</dbReference>
<dbReference type="Pfam" id="PF05025">
    <property type="entry name" value="RbsD_FucU"/>
    <property type="match status" value="1"/>
</dbReference>
<dbReference type="SUPFAM" id="SSF102546">
    <property type="entry name" value="RbsD-like"/>
    <property type="match status" value="1"/>
</dbReference>